<protein>
    <recommendedName>
        <fullName>Cbp/p300-interacting transactivator 4</fullName>
    </recommendedName>
</protein>
<name>CITE4_BOVIN</name>
<sequence>MADHLMLAEGYSLVPRPPPAAPAHGPHALRTLQPYSSPGLDSGLRPRGAPLGPPPPPQGTVAYGAFGPSPTFQPFPAVPPPAAGNAHLQPVATLYPGRATMPPGAPGGPSGPQPAPGAPAPPLQPPAHALGGMDAELIDEEALTSLELELGLHRVRDLPELFLGQSEFDCFSDLGSAPPAGSVSC</sequence>
<keyword id="KW-0010">Activator</keyword>
<keyword id="KW-0963">Cytoplasm</keyword>
<keyword id="KW-0539">Nucleus</keyword>
<keyword id="KW-1185">Reference proteome</keyword>
<keyword id="KW-0804">Transcription</keyword>
<keyword id="KW-0805">Transcription regulation</keyword>
<comment type="function">
    <text evidence="1">Acts as a transcriptional coactivator for TFAP2/AP-2. Enhances estrogen-dependent transactivation mediated by estrogen receptors. May function as an inhibitor of transactivation by HIF1A by disrupting HIF1A interaction with CREBBP. May be involved in regulation of gene expression during development and differentiation of blood cells, endothelial cells and mammary epithelial cells (By similarity).</text>
</comment>
<comment type="subunit">
    <text evidence="1">Interacts via its C-terminal region with the CH1 domain of CREBBP and EP300. Interacts with all TFAP2/AP-2 isoforms (By similarity).</text>
</comment>
<comment type="subcellular location">
    <subcellularLocation>
        <location evidence="1">Nucleus</location>
    </subcellularLocation>
    <subcellularLocation>
        <location evidence="1">Cytoplasm</location>
    </subcellularLocation>
</comment>
<comment type="similarity">
    <text evidence="3">Belongs to the CITED family.</text>
</comment>
<accession>Q2HJ78</accession>
<gene>
    <name type="primary">CITED4</name>
</gene>
<proteinExistence type="evidence at transcript level"/>
<evidence type="ECO:0000250" key="1"/>
<evidence type="ECO:0000256" key="2">
    <source>
        <dbReference type="SAM" id="MobiDB-lite"/>
    </source>
</evidence>
<evidence type="ECO:0000305" key="3"/>
<reference key="1">
    <citation type="submission" date="2006-02" db="EMBL/GenBank/DDBJ databases">
        <authorList>
            <consortium name="NIH - Mammalian Gene Collection (MGC) project"/>
        </authorList>
    </citation>
    <scope>NUCLEOTIDE SEQUENCE [LARGE SCALE MRNA]</scope>
    <source>
        <strain>Hereford</strain>
        <tissue>Uterus</tissue>
    </source>
</reference>
<organism>
    <name type="scientific">Bos taurus</name>
    <name type="common">Bovine</name>
    <dbReference type="NCBI Taxonomy" id="9913"/>
    <lineage>
        <taxon>Eukaryota</taxon>
        <taxon>Metazoa</taxon>
        <taxon>Chordata</taxon>
        <taxon>Craniata</taxon>
        <taxon>Vertebrata</taxon>
        <taxon>Euteleostomi</taxon>
        <taxon>Mammalia</taxon>
        <taxon>Eutheria</taxon>
        <taxon>Laurasiatheria</taxon>
        <taxon>Artiodactyla</taxon>
        <taxon>Ruminantia</taxon>
        <taxon>Pecora</taxon>
        <taxon>Bovidae</taxon>
        <taxon>Bovinae</taxon>
        <taxon>Bos</taxon>
    </lineage>
</organism>
<dbReference type="EMBL" id="BC113266">
    <property type="protein sequence ID" value="AAI13267.1"/>
    <property type="molecule type" value="mRNA"/>
</dbReference>
<dbReference type="RefSeq" id="NP_001074195.1">
    <property type="nucleotide sequence ID" value="NM_001080726.1"/>
</dbReference>
<dbReference type="FunCoup" id="Q2HJ78">
    <property type="interactions" value="1"/>
</dbReference>
<dbReference type="STRING" id="9913.ENSBTAP00000020109"/>
<dbReference type="PaxDb" id="9913-ENSBTAP00000020109"/>
<dbReference type="Ensembl" id="ENSBTAT00000104817.1">
    <property type="protein sequence ID" value="ENSBTAP00000075402.1"/>
    <property type="gene ID" value="ENSBTAG00000015113.4"/>
</dbReference>
<dbReference type="GeneID" id="504742"/>
<dbReference type="KEGG" id="bta:504742"/>
<dbReference type="CTD" id="163732"/>
<dbReference type="VEuPathDB" id="HostDB:ENSBTAG00000015113"/>
<dbReference type="VGNC" id="VGNC:27378">
    <property type="gene designation" value="CITED4"/>
</dbReference>
<dbReference type="eggNOG" id="ENOG502QQEE">
    <property type="taxonomic scope" value="Eukaryota"/>
</dbReference>
<dbReference type="GeneTree" id="ENSGT00530000063624"/>
<dbReference type="HOGENOM" id="CLU_128809_0_0_1"/>
<dbReference type="InParanoid" id="Q2HJ78"/>
<dbReference type="OMA" id="GYHLVQR"/>
<dbReference type="OrthoDB" id="8939897at2759"/>
<dbReference type="TreeFam" id="TF331915"/>
<dbReference type="Reactome" id="R-BTA-8866907">
    <property type="pathway name" value="Activation of the TFAP2 (AP-2) family of transcription factors"/>
</dbReference>
<dbReference type="Proteomes" id="UP000009136">
    <property type="component" value="Chromosome 3"/>
</dbReference>
<dbReference type="Bgee" id="ENSBTAG00000015113">
    <property type="expression patterns" value="Expressed in parenchyma of mammary gland and 102 other cell types or tissues"/>
</dbReference>
<dbReference type="GO" id="GO:0005737">
    <property type="term" value="C:cytoplasm"/>
    <property type="evidence" value="ECO:0007669"/>
    <property type="project" value="UniProtKB-SubCell"/>
</dbReference>
<dbReference type="GO" id="GO:0005634">
    <property type="term" value="C:nucleus"/>
    <property type="evidence" value="ECO:0000318"/>
    <property type="project" value="GO_Central"/>
</dbReference>
<dbReference type="GO" id="GO:0003713">
    <property type="term" value="F:transcription coactivator activity"/>
    <property type="evidence" value="ECO:0000250"/>
    <property type="project" value="UniProtKB"/>
</dbReference>
<dbReference type="GO" id="GO:0043627">
    <property type="term" value="P:response to estrogen"/>
    <property type="evidence" value="ECO:0000250"/>
    <property type="project" value="UniProtKB"/>
</dbReference>
<dbReference type="FunFam" id="6.10.140.2200:FF:000001">
    <property type="entry name" value="Cbp/p300-interacting transactivator 2 isoform 1"/>
    <property type="match status" value="1"/>
</dbReference>
<dbReference type="Gene3D" id="6.10.140.2200">
    <property type="match status" value="1"/>
</dbReference>
<dbReference type="InterPro" id="IPR007576">
    <property type="entry name" value="CITED"/>
</dbReference>
<dbReference type="PANTHER" id="PTHR17045:SF5">
    <property type="entry name" value="CBP_P300-INTERACTING TRANSACTIVATOR 4"/>
    <property type="match status" value="1"/>
</dbReference>
<dbReference type="PANTHER" id="PTHR17045">
    <property type="entry name" value="MELANOCYTE SPECIFIC GENE RELATED CITED"/>
    <property type="match status" value="1"/>
</dbReference>
<dbReference type="Pfam" id="PF04487">
    <property type="entry name" value="CITED"/>
    <property type="match status" value="1"/>
</dbReference>
<feature type="chain" id="PRO_0000285517" description="Cbp/p300-interacting transactivator 4">
    <location>
        <begin position="1"/>
        <end position="185"/>
    </location>
</feature>
<feature type="region of interest" description="Disordered" evidence="2">
    <location>
        <begin position="15"/>
        <end position="64"/>
    </location>
</feature>
<feature type="region of interest" description="Disordered" evidence="2">
    <location>
        <begin position="95"/>
        <end position="130"/>
    </location>
</feature>
<feature type="compositionally biased region" description="Pro residues" evidence="2">
    <location>
        <begin position="103"/>
        <end position="125"/>
    </location>
</feature>